<protein>
    <recommendedName>
        <fullName evidence="4">Indolepyruvate C-methyltransferase</fullName>
        <ecNumber evidence="1 2">2.1.1.47</ecNumber>
    </recommendedName>
    <alternativeName>
        <fullName evidence="4">S-adenosylmethionine: indolepyruvate 3-methyltransferase</fullName>
    </alternativeName>
</protein>
<gene>
    <name evidence="3" type="primary">ind1</name>
</gene>
<accession>A0A0D4BS77</accession>
<dbReference type="EC" id="2.1.1.47" evidence="1 2"/>
<dbReference type="EMBL" id="KM596502">
    <property type="protein sequence ID" value="AJT38682.1"/>
    <property type="molecule type" value="Genomic_DNA"/>
</dbReference>
<dbReference type="SMR" id="A0A0D4BS77"/>
<dbReference type="KEGG" id="ag:AJT38682"/>
<dbReference type="BioCyc" id="MetaCyc:MONOMER-19774"/>
<dbReference type="GO" id="GO:0030747">
    <property type="term" value="F:indolepyruvate C-methyltransferase activity"/>
    <property type="evidence" value="ECO:0007669"/>
    <property type="project" value="UniProtKB-EC"/>
</dbReference>
<dbReference type="GO" id="GO:0017000">
    <property type="term" value="P:antibiotic biosynthetic process"/>
    <property type="evidence" value="ECO:0007669"/>
    <property type="project" value="UniProtKB-KW"/>
</dbReference>
<dbReference type="GO" id="GO:0032259">
    <property type="term" value="P:methylation"/>
    <property type="evidence" value="ECO:0007669"/>
    <property type="project" value="UniProtKB-KW"/>
</dbReference>
<dbReference type="CDD" id="cd02440">
    <property type="entry name" value="AdoMet_MTases"/>
    <property type="match status" value="1"/>
</dbReference>
<dbReference type="Gene3D" id="3.40.50.150">
    <property type="entry name" value="Vaccinia Virus protein VP39"/>
    <property type="match status" value="1"/>
</dbReference>
<dbReference type="Gene3D" id="1.10.10.10">
    <property type="entry name" value="Winged helix-like DNA-binding domain superfamily/Winged helix DNA-binding domain"/>
    <property type="match status" value="1"/>
</dbReference>
<dbReference type="InterPro" id="IPR041698">
    <property type="entry name" value="Methyltransf_25"/>
</dbReference>
<dbReference type="InterPro" id="IPR029063">
    <property type="entry name" value="SAM-dependent_MTases_sf"/>
</dbReference>
<dbReference type="InterPro" id="IPR036388">
    <property type="entry name" value="WH-like_DNA-bd_sf"/>
</dbReference>
<dbReference type="Pfam" id="PF13649">
    <property type="entry name" value="Methyltransf_25"/>
    <property type="match status" value="1"/>
</dbReference>
<dbReference type="SUPFAM" id="SSF53335">
    <property type="entry name" value="S-adenosyl-L-methionine-dependent methyltransferases"/>
    <property type="match status" value="1"/>
</dbReference>
<name>IND1_STRGR</name>
<sequence>MTRTDFAQSAVASIFTGAIASHAAVLADDLGLFDALAKGKLRNRDLDRSPWLRNRIRISGALEALCRVGAVQRCTDGYELTDVGTELAGQVPVFRLWLGGYASVLAGQISIGADPATGVHGGIVAESSGAIGARYLDETIVNLLESLRPEGRICDIGCGTGARLLRVCRRVNQPGIGYDLSAKAVEAARETVDEARRIGVDIDVRQGDATALTQDHPDVDIVTQAFMTHHIAPDEYCAAVLRSYRSRFPRARYLVIFDTVPSQDSEEPEIFAPGFDYIHALQNMEPRSRGAARRMFTEAGYICREEVELAVPNSYAWVLEMRDREGPAS</sequence>
<keyword id="KW-0045">Antibiotic biosynthesis</keyword>
<keyword id="KW-0489">Methyltransferase</keyword>
<keyword id="KW-0949">S-adenosyl-L-methionine</keyword>
<keyword id="KW-0808">Transferase</keyword>
<organism>
    <name type="scientific">Streptomyces griseus</name>
    <dbReference type="NCBI Taxonomy" id="1911"/>
    <lineage>
        <taxon>Bacteria</taxon>
        <taxon>Bacillati</taxon>
        <taxon>Actinomycetota</taxon>
        <taxon>Actinomycetes</taxon>
        <taxon>Kitasatosporales</taxon>
        <taxon>Streptomycetaceae</taxon>
        <taxon>Streptomyces</taxon>
    </lineage>
</organism>
<feature type="chain" id="PRO_0000443563" description="Indolepyruvate C-methyltransferase">
    <location>
        <begin position="1"/>
        <end position="329"/>
    </location>
</feature>
<reference key="1">
    <citation type="journal article" date="2015" name="Proc. Natl. Acad. Sci. U.S.A.">
        <title>In vitro reconstitution of indolmycin biosynthesis reveals the molecular basis of oxazolinone assembly.</title>
        <authorList>
            <person name="Du Y.L."/>
            <person name="Alkhalaf L.M."/>
            <person name="Ryan K.S."/>
        </authorList>
    </citation>
    <scope>NUCLEOTIDE SEQUENCE [GENOMIC DNA]</scope>
    <scope>FUNCTION</scope>
    <scope>CATALYTIC ACTIVITY</scope>
    <scope>DISRUPTION PHENOTYPE</scope>
    <source>
        <strain evidence="6">ATCC 12648</strain>
    </source>
</reference>
<reference key="2">
    <citation type="journal article" date="1975" name="J. Biol. Chem.">
        <title>Isolation and characterization of tryptophan transaminase and indolepyruvate C-methyltransferase. Enzymes involved in indolmycin biosynthesis in Streptomyces griseus.</title>
        <authorList>
            <person name="Speedie M.K."/>
            <person name="Hornemann U."/>
            <person name="Floss H.G."/>
        </authorList>
    </citation>
    <scope>FUNCTION</scope>
    <scope>CATALYTIC ACTIVITY</scope>
    <scope>BIOPHYSICOCHEMICAL PROPERTIES</scope>
    <scope>ACTIVITY REGULATION</scope>
</reference>
<proteinExistence type="evidence at protein level"/>
<evidence type="ECO:0000269" key="1">
    <source>
    </source>
</evidence>
<evidence type="ECO:0000269" key="2">
    <source>
    </source>
</evidence>
<evidence type="ECO:0000303" key="3">
    <source>
    </source>
</evidence>
<evidence type="ECO:0000303" key="4">
    <source>
    </source>
</evidence>
<evidence type="ECO:0000305" key="5"/>
<evidence type="ECO:0000312" key="6">
    <source>
        <dbReference type="EMBL" id="AJT38682.1"/>
    </source>
</evidence>
<comment type="function">
    <text evidence="1 2">Involved in the biosynthesis of the antibiotic indolmycin, an inhibitor of the bacterial tryptophan-tRNA synthetases. Catalyzes the transfer of a methyl group from S-adenosyl-L-methionine to position 3 of the aliphatic side chain of (indol-3-yl)pyruvate to yield 3-methylindolepyruvate.</text>
</comment>
<comment type="catalytic activity">
    <reaction evidence="1 2">
        <text>indole-3-pyruvate + S-adenosyl-L-methionine = (R)-3-(indol-3-yl)-2-oxobutanoate + S-adenosyl-L-homocysteine + H(+)</text>
        <dbReference type="Rhea" id="RHEA:12112"/>
        <dbReference type="ChEBI" id="CHEBI:15378"/>
        <dbReference type="ChEBI" id="CHEBI:17640"/>
        <dbReference type="ChEBI" id="CHEBI:57856"/>
        <dbReference type="ChEBI" id="CHEBI:59789"/>
        <dbReference type="ChEBI" id="CHEBI:91180"/>
        <dbReference type="EC" id="2.1.1.47"/>
    </reaction>
</comment>
<comment type="activity regulation">
    <text evidence="2">Strongly inhibited by the thiol reagents p-chloromercuribenzoate and N-ethylmaleimide. Partially inhibited by o-phenanthroline and 2,2'-dipyridyl. Competitively inhibited by L-tryptophan and indolmycin.</text>
</comment>
<comment type="biophysicochemical properties">
    <kinetics>
        <KM evidence="2">4.8 uM for indolepyruvate (at 30 degrees Celsius and pH 7.6)</KM>
        <KM evidence="2">12 uM for S-adenosylmethionine (at 30 degrees Celsius and pH 7.6)</KM>
    </kinetics>
    <phDependence>
        <text evidence="2">Optimum pH is 7.5-8.5. Loss of methyltransferase activity at pH 5.5 and below.</text>
    </phDependence>
</comment>
<comment type="disruption phenotype">
    <text evidence="1">Cells laking this gene are unable to produce indolmycenate.</text>
</comment>
<comment type="similarity">
    <text evidence="5">Belongs to the methyltransferase superfamily.</text>
</comment>